<keyword id="KW-1035">Host cytoplasm</keyword>
<keyword id="KW-0945">Host-virus interaction</keyword>
<keyword id="KW-1090">Inhibition of host innate immune response by virus</keyword>
<keyword id="KW-1185">Reference proteome</keyword>
<keyword id="KW-0694">RNA-binding</keyword>
<keyword id="KW-0941">Suppressor of RNA silencing</keyword>
<keyword id="KW-0899">Viral immunoevasion</keyword>
<organismHost>
    <name type="scientific">Avena sativa</name>
    <name type="common">Oat</name>
    <dbReference type="NCBI Taxonomy" id="4498"/>
</organismHost>
<organismHost>
    <name type="scientific">Digitaria</name>
    <dbReference type="NCBI Taxonomy" id="66017"/>
</organismHost>
<organismHost>
    <name type="scientific">Eragrostis</name>
    <dbReference type="NCBI Taxonomy" id="38413"/>
</organismHost>
<organismHost>
    <name type="scientific">Hordeum vulgare</name>
    <name type="common">Barley</name>
    <dbReference type="NCBI Taxonomy" id="4513"/>
</organismHost>
<organismHost>
    <name type="scientific">Oryza sativa</name>
    <name type="common">Rice</name>
    <dbReference type="NCBI Taxonomy" id="4530"/>
</organismHost>
<organismHost>
    <name type="scientific">Setaria italica</name>
    <name type="common">Foxtail millet</name>
    <name type="synonym">Panicum italicum</name>
    <dbReference type="NCBI Taxonomy" id="4555"/>
</organismHost>
<organismHost>
    <name type="scientific">Setaria viridis</name>
    <name type="common">Green bristlegrass</name>
    <name type="synonym">Setaria italica subsp. viridis</name>
    <dbReference type="NCBI Taxonomy" id="4556"/>
</organismHost>
<organismHost>
    <name type="scientific">Triticum aestivum</name>
    <name type="common">Wheat</name>
    <dbReference type="NCBI Taxonomy" id="4565"/>
</organismHost>
<organismHost>
    <name type="scientific">Zea mays</name>
    <name type="common">Maize</name>
    <dbReference type="NCBI Taxonomy" id="4577"/>
</organismHost>
<reference key="1">
    <citation type="journal article" date="1991" name="J. Gen. Virol.">
        <title>Complete nucleotide sequence of RNA 3 of rice stripe virus: an ambisense coding strategy.</title>
        <authorList>
            <person name="Zhu Y."/>
            <person name="Hayakawa T."/>
            <person name="Toriyama S."/>
            <person name="Takahashi M."/>
        </authorList>
    </citation>
    <scope>NUCLEOTIDE SEQUENCE [GENOMIC RNA]</scope>
</reference>
<reference key="2">
    <citation type="journal article" date="2005" name="Virus Genes">
        <title>Nucleic acid binding property of the gene products of rice stripe virus.</title>
        <authorList>
            <person name="Liang D."/>
            <person name="Ma X."/>
            <person name="Qu Z."/>
            <person name="Hull R."/>
        </authorList>
    </citation>
    <scope>RNA-BINDING</scope>
</reference>
<reference key="3">
    <citation type="journal article" date="2005" name="Virus Genes">
        <title>Detection and localization of Rice stripe virus gene products in vivo.</title>
        <authorList>
            <person name="Liang D."/>
            <person name="Qu Z."/>
            <person name="Ma X."/>
            <person name="Hull R."/>
        </authorList>
    </citation>
    <scope>SUBCELLULAR LOCATION</scope>
</reference>
<reference key="4">
    <citation type="journal article" date="2010" name="J. Mol. Biol.">
        <title>Size-independent and noncooperative recognition of dsRNA by the rice stripe virus RNA silencing suppressor NS3.</title>
        <authorList>
            <person name="Shen M."/>
            <person name="Xu Y."/>
            <person name="Jia R."/>
            <person name="Zhou X."/>
            <person name="Ye K."/>
        </authorList>
    </citation>
    <scope>HOMODIMERIZATION</scope>
    <scope>MUTAGENESIS OF ARG-50; LYS-77; ARG-94; LYS-112; ARG-124; LYS-127; LYS-165; ARG-169; 173-LYS-LYS-174; ARG-175 AND ARG-190</scope>
</reference>
<proteinExistence type="evidence at protein level"/>
<dbReference type="EMBL" id="X53563">
    <property type="protein sequence ID" value="CAA37634.1"/>
    <property type="molecule type" value="Genomic_RNA"/>
</dbReference>
<dbReference type="SMR" id="P26658"/>
<dbReference type="KEGG" id="vg:962686"/>
<dbReference type="Proteomes" id="UP000006677">
    <property type="component" value="Genome"/>
</dbReference>
<dbReference type="GO" id="GO:0030430">
    <property type="term" value="C:host cell cytoplasm"/>
    <property type="evidence" value="ECO:0007669"/>
    <property type="project" value="UniProtKB-SubCell"/>
</dbReference>
<dbReference type="GO" id="GO:0003723">
    <property type="term" value="F:RNA binding"/>
    <property type="evidence" value="ECO:0007669"/>
    <property type="project" value="UniProtKB-KW"/>
</dbReference>
<dbReference type="GO" id="GO:0052170">
    <property type="term" value="P:symbiont-mediated suppression of host innate immune response"/>
    <property type="evidence" value="ECO:0007669"/>
    <property type="project" value="UniProtKB-KW"/>
</dbReference>
<dbReference type="Gene3D" id="1.20.1440.190">
    <property type="entry name" value="Tenuivirus movement protein"/>
    <property type="match status" value="1"/>
</dbReference>
<dbReference type="InterPro" id="IPR007974">
    <property type="entry name" value="Tenui_movmnt_prot"/>
</dbReference>
<dbReference type="InterPro" id="IPR043105">
    <property type="entry name" value="Tenui_NS3"/>
</dbReference>
<dbReference type="Pfam" id="PF05310">
    <property type="entry name" value="Tenui_NS3"/>
    <property type="match status" value="1"/>
</dbReference>
<sequence length="211" mass="23874">MNVFTSSVGSVEFDHPLLLENDLTSLSINCDDVHCSSRALCYIYDIHSSRHPSIDEHQFLRLLHGPDDAVTLGSFLKTLIWILSHDKNLPEEYRLPTIMMSSSYVKFFTEVKPRPPSTNCWTCRMSKDNLPFTVPSVKGFPPDAELYIVPISDHDGKPVKFDNRKTLYRSPSKKRHKYVISSDKPPLSARYVKYVDSSALESLPGSSPAVL</sequence>
<gene>
    <name type="ORF">p3</name>
</gene>
<name>VSR_RSVT</name>
<evidence type="ECO:0000269" key="1">
    <source>
    </source>
</evidence>
<evidence type="ECO:0000269" key="2">
    <source>
    </source>
</evidence>
<evidence type="ECO:0000305" key="3"/>
<organism>
    <name type="scientific">Rice stripe virus (isolate T)</name>
    <name type="common">RSV</name>
    <dbReference type="NCBI Taxonomy" id="36394"/>
    <lineage>
        <taxon>Viruses</taxon>
        <taxon>Riboviria</taxon>
        <taxon>Orthornavirae</taxon>
        <taxon>Negarnaviricota</taxon>
        <taxon>Polyploviricotina</taxon>
        <taxon>Ellioviricetes</taxon>
        <taxon>Bunyavirales</taxon>
        <taxon>Phenuiviridae</taxon>
        <taxon>Tenuivirus</taxon>
        <taxon>Tenuivirus oryzaclavatae</taxon>
    </lineage>
</organism>
<feature type="chain" id="PRO_0000222529" description="Suppressor of RNA silencing p3">
    <location>
        <begin position="1"/>
        <end position="211"/>
    </location>
</feature>
<feature type="mutagenesis site" description="Complete loss of RNA-binding and suppression of RNA-mediated gene silencing." evidence="2">
    <original>R</original>
    <variation>G</variation>
    <location>
        <position position="50"/>
    </location>
</feature>
<feature type="mutagenesis site" description="Complete loss of RNA-binding and suppression of RNA-mediated gene silencing." evidence="2">
    <original>K</original>
    <variation>G</variation>
    <location>
        <position position="77"/>
    </location>
</feature>
<feature type="mutagenesis site" description="No effect on RNA-binding or suppression of RNA-mediated gene silencing." evidence="2">
    <original>R</original>
    <variation>G</variation>
    <location>
        <position position="94"/>
    </location>
</feature>
<feature type="mutagenesis site" description="Complete loss of RNA-binding and suppression of RNA-mediated gene silencing." evidence="2">
    <original>K</original>
    <variation>G</variation>
    <location>
        <position position="112"/>
    </location>
</feature>
<feature type="mutagenesis site" description="Complete loss of RNA-binding and suppression of RNA-mediated gene silencing." evidence="2">
    <original>R</original>
    <variation>G</variation>
    <location>
        <position position="124"/>
    </location>
</feature>
<feature type="mutagenesis site" description="No effect on RNA-binding or suppression of RNA-mediated gene silencing." evidence="2">
    <original>K</original>
    <variation>G</variation>
    <location>
        <position position="127"/>
    </location>
</feature>
<feature type="mutagenesis site" description="No effect on RNA-binding or suppression of RNA-mediated gene silencing." evidence="2">
    <original>K</original>
    <variation>G</variation>
    <location>
        <position position="165"/>
    </location>
</feature>
<feature type="mutagenesis site" description="No effect on RNA-binding or suppression of RNA-mediated gene silencing." evidence="2">
    <original>R</original>
    <variation>G</variation>
    <location>
        <position position="169"/>
    </location>
</feature>
<feature type="mutagenesis site" description="Complete loss of RNA-binding and suppression of RNA-mediated gene silencing." evidence="2">
    <original>KK</original>
    <variation>GG</variation>
    <variation>ED</variation>
    <location>
        <begin position="173"/>
        <end position="174"/>
    </location>
</feature>
<feature type="mutagenesis site" description="Complete loss of RNA-binding and suppression of RNA-mediated gene silencing." evidence="2">
    <original>R</original>
    <variation>E</variation>
    <location>
        <position position="175"/>
    </location>
</feature>
<feature type="mutagenesis site" description="Complete loss of RNA-binding and suppression of RNA-mediated gene silencing." evidence="2">
    <original>R</original>
    <variation>G</variation>
    <location>
        <position position="190"/>
    </location>
</feature>
<protein>
    <recommendedName>
        <fullName>Suppressor of RNA silencing p3</fullName>
    </recommendedName>
    <alternativeName>
        <fullName>Protein NS3</fullName>
    </alternativeName>
    <alternativeName>
        <fullName>Protein p3</fullName>
    </alternativeName>
</protein>
<comment type="function">
    <text>Acts as a suppressor of RNA-mediated gene silencing, also known as post-transcriptional gene silencing (PTGS), presumably through the binding of dsRNA.</text>
</comment>
<comment type="subunit">
    <text>Homodimer.</text>
</comment>
<comment type="subcellular location">
    <subcellularLocation>
        <location evidence="1">Host cytoplasm</location>
    </subcellularLocation>
</comment>
<comment type="similarity">
    <text evidence="3">Belongs to the tenuiviruses p3 protein family.</text>
</comment>
<accession>P26658</accession>